<evidence type="ECO:0000255" key="1">
    <source>
        <dbReference type="PROSITE-ProRule" id="PRU00227"/>
    </source>
</evidence>
<evidence type="ECO:0000269" key="2">
    <source>
    </source>
</evidence>
<evidence type="ECO:0000269" key="3">
    <source>
    </source>
</evidence>
<evidence type="ECO:0000303" key="4">
    <source>
    </source>
</evidence>
<reference key="1">
    <citation type="journal article" date="2010" name="Nature">
        <title>Comparative genomics reveals mobile pathogenicity chromosomes in Fusarium.</title>
        <authorList>
            <person name="Ma L.-J."/>
            <person name="van der Does H.C."/>
            <person name="Borkovich K.A."/>
            <person name="Coleman J.J."/>
            <person name="Daboussi M.-J."/>
            <person name="Di Pietro A."/>
            <person name="Dufresne M."/>
            <person name="Freitag M."/>
            <person name="Grabherr M."/>
            <person name="Henrissat B."/>
            <person name="Houterman P.M."/>
            <person name="Kang S."/>
            <person name="Shim W.-B."/>
            <person name="Woloshuk C."/>
            <person name="Xie X."/>
            <person name="Xu J.-R."/>
            <person name="Antoniw J."/>
            <person name="Baker S.E."/>
            <person name="Bluhm B.H."/>
            <person name="Breakspear A."/>
            <person name="Brown D.W."/>
            <person name="Butchko R.A.E."/>
            <person name="Chapman S."/>
            <person name="Coulson R."/>
            <person name="Coutinho P.M."/>
            <person name="Danchin E.G.J."/>
            <person name="Diener A."/>
            <person name="Gale L.R."/>
            <person name="Gardiner D.M."/>
            <person name="Goff S."/>
            <person name="Hammond-Kosack K.E."/>
            <person name="Hilburn K."/>
            <person name="Hua-Van A."/>
            <person name="Jonkers W."/>
            <person name="Kazan K."/>
            <person name="Kodira C.D."/>
            <person name="Koehrsen M."/>
            <person name="Kumar L."/>
            <person name="Lee Y.-H."/>
            <person name="Li L."/>
            <person name="Manners J.M."/>
            <person name="Miranda-Saavedra D."/>
            <person name="Mukherjee M."/>
            <person name="Park G."/>
            <person name="Park J."/>
            <person name="Park S.-Y."/>
            <person name="Proctor R.H."/>
            <person name="Regev A."/>
            <person name="Ruiz-Roldan M.C."/>
            <person name="Sain D."/>
            <person name="Sakthikumar S."/>
            <person name="Sykes S."/>
            <person name="Schwartz D.C."/>
            <person name="Turgeon B.G."/>
            <person name="Wapinski I."/>
            <person name="Yoder O."/>
            <person name="Young S."/>
            <person name="Zeng Q."/>
            <person name="Zhou S."/>
            <person name="Galagan J."/>
            <person name="Cuomo C.A."/>
            <person name="Kistler H.C."/>
            <person name="Rep M."/>
        </authorList>
    </citation>
    <scope>NUCLEOTIDE SEQUENCE [LARGE SCALE GENOMIC DNA]</scope>
    <source>
        <strain>4287 / CBS 123668 / FGSC 9935 / NRRL 34936</strain>
    </source>
</reference>
<reference key="2">
    <citation type="journal article" date="2007" name="Fungal Genet. Biol.">
        <title>The gene coding for a new transcription factor (ftf1) of Fusarium oxysporum is only expressed during infection of common bean.</title>
        <authorList>
            <person name="Ramos B."/>
            <person name="Alves-Santos F.M."/>
            <person name="Garcia-Sanchez M.A."/>
            <person name="Martin-Rodrigues N."/>
            <person name="Eslava A.P."/>
            <person name="Diaz-Minguez J.M."/>
        </authorList>
    </citation>
    <scope>FUNCTION</scope>
    <scope>INDUCTION</scope>
</reference>
<reference key="3">
    <citation type="journal article" date="2016" name="Mol. Plant Pathol.">
        <title>The FTF gene family regulates virulence and expression of SIX effectors in Fusarium oxysporum.</title>
        <authorList>
            <person name="Nino-Sanchez J."/>
            <person name="Casado-Del Castillo V."/>
            <person name="Tello V."/>
            <person name="De Vega-Bartol J.J."/>
            <person name="Ramos B."/>
            <person name="Sukno S.A."/>
            <person name="Diaz Minguez J.M."/>
        </authorList>
    </citation>
    <scope>FUNCTION</scope>
</reference>
<keyword id="KW-0479">Metal-binding</keyword>
<keyword id="KW-0539">Nucleus</keyword>
<keyword id="KW-0804">Transcription</keyword>
<keyword id="KW-0805">Transcription regulation</keyword>
<keyword id="KW-0843">Virulence</keyword>
<sequence length="1079" mass="118477">MSGRAVLSPQHAQASFDSGLQLYGDVPELNAVPPPSHSALMDFTRFDDFAFAYYGLPDQSSLVSLVDHTHTFQSLTTFPQHQAISGLAHSGLPFGTLPTDNYNQSMEDSKAPPDRTSPASNALEDPTTDEFGLASPNRAGGTDLGGKPKEDKADATPAWSELKTKAGKERKRLPLACIACRRKKIRCSGEKPACKQCLHSCIPCVYKVATRKAAPRTNCMAMLDKRPKRMEERAIKAISKSDQEVASSVTHPVVKQAIPGTVTSSRPTKKRGAEEAFEPDLEAWAKASSEPKIEGDDGSSSLQVQEGEENKLQHEGTEALPSREIQEHLAEVFFENIYGQSYHLLHKPSYMRKLKNGTLPPVLVLTVCAVAARFTSNPLVSSSGPEFLRGEEWASHARDICTRRYEWPNLTILTCLLILGLHEFGTCQGGRSWALGGQAIRMAFALQLHKDLEYDPSGRNGTTTQLSFIDREIRRRIMWACFLMDRFNSSGTDRPMFIREDTIQIPLPVKEKYFQFDMPAPTEMLDGRVPHPPSPNDGQIANSRENMGVAAFLIRAIALWGRIITYLSQGCKDLDPNPLWEDESHYMKHLDDVVNLEASLPLSLKHSAENLEVHKTENTASQFLFMHICLQHNILFVNRAAMSARKQHGVHDDFVSEASKRAFNAANRISELLREAEQSGCFVSAPFAGYCAFSSTTVHILGIISRNPFTKLAAQANLTTNIKYLHRMKKYWGMFHWMVENVRTQYRNVLDAMRAGANVEERATQPSFLQYGDWFNRYPRGLSDAEFMDPATHKRKDSGADGVLEAKRELRSVEEYFTLPTPRRVENKDTIRATAPKRKQSAKKQAGMPAQPGQHLDSLQSIDADAVSQERKFSGGLGLQITGAAGFNPLAASNQQSPDFSTTISPTRPANMTPFAHHAHTPTFFPPELLAMNFGQGSNGNIDPLDRQLIYGGYSMDASTGLGGGQDMMSGLGWDTVALGAQPDGRLQSRPSNAKAGMHGQSAGMADGAGLSRPEASSAWFMPFNMEPPDMDQDAGFNMGGIDPFTGVFGGGGSGLATPNALGGLILGHCRGSSTHSTR</sequence>
<gene>
    <name evidence="4" type="primary">FTF1a</name>
    <name type="ORF">FOXG_17458</name>
</gene>
<protein>
    <recommendedName>
        <fullName evidence="4">Zn(2)-C6 fungal-type transcription factor FTF1a</fullName>
    </recommendedName>
    <alternativeName>
        <fullName evidence="4">Fusarium transcription factor 1a</fullName>
    </alternativeName>
</protein>
<accession>A0A0J9WAS0</accession>
<dbReference type="EMBL" id="DS231746">
    <property type="protein sequence ID" value="KNB20464.1"/>
    <property type="molecule type" value="Genomic_DNA"/>
</dbReference>
<dbReference type="RefSeq" id="XP_018258509.1">
    <property type="nucleotide sequence ID" value="XM_018397465.1"/>
</dbReference>
<dbReference type="GeneID" id="28958217"/>
<dbReference type="KEGG" id="fox:FOXG_17458"/>
<dbReference type="VEuPathDB" id="FungiDB:FOXG_17458"/>
<dbReference type="OrthoDB" id="67972at110618"/>
<dbReference type="GO" id="GO:0005634">
    <property type="term" value="C:nucleus"/>
    <property type="evidence" value="ECO:0007669"/>
    <property type="project" value="UniProtKB-SubCell"/>
</dbReference>
<dbReference type="GO" id="GO:0003677">
    <property type="term" value="F:DNA binding"/>
    <property type="evidence" value="ECO:0007669"/>
    <property type="project" value="InterPro"/>
</dbReference>
<dbReference type="GO" id="GO:0000981">
    <property type="term" value="F:DNA-binding transcription factor activity, RNA polymerase II-specific"/>
    <property type="evidence" value="ECO:0007669"/>
    <property type="project" value="InterPro"/>
</dbReference>
<dbReference type="GO" id="GO:0008270">
    <property type="term" value="F:zinc ion binding"/>
    <property type="evidence" value="ECO:0007669"/>
    <property type="project" value="InterPro"/>
</dbReference>
<dbReference type="GO" id="GO:0006351">
    <property type="term" value="P:DNA-templated transcription"/>
    <property type="evidence" value="ECO:0007669"/>
    <property type="project" value="InterPro"/>
</dbReference>
<dbReference type="CDD" id="cd12148">
    <property type="entry name" value="fungal_TF_MHR"/>
    <property type="match status" value="1"/>
</dbReference>
<dbReference type="CDD" id="cd00067">
    <property type="entry name" value="GAL4"/>
    <property type="match status" value="1"/>
</dbReference>
<dbReference type="Gene3D" id="4.10.240.10">
    <property type="entry name" value="Zn(2)-C6 fungal-type DNA-binding domain"/>
    <property type="match status" value="1"/>
</dbReference>
<dbReference type="InterPro" id="IPR050815">
    <property type="entry name" value="TF_fung"/>
</dbReference>
<dbReference type="InterPro" id="IPR007219">
    <property type="entry name" value="Transcription_factor_dom_fun"/>
</dbReference>
<dbReference type="InterPro" id="IPR036864">
    <property type="entry name" value="Zn2-C6_fun-type_DNA-bd_sf"/>
</dbReference>
<dbReference type="InterPro" id="IPR001138">
    <property type="entry name" value="Zn2Cys6_DnaBD"/>
</dbReference>
<dbReference type="PANTHER" id="PTHR47338:SF27">
    <property type="entry name" value="ZN(II)2CYS6 TRANSCRIPTION FACTOR (EUROFUNG)"/>
    <property type="match status" value="1"/>
</dbReference>
<dbReference type="PANTHER" id="PTHR47338">
    <property type="entry name" value="ZN(II)2CYS6 TRANSCRIPTION FACTOR (EUROFUNG)-RELATED"/>
    <property type="match status" value="1"/>
</dbReference>
<dbReference type="Pfam" id="PF04082">
    <property type="entry name" value="Fungal_trans"/>
    <property type="match status" value="1"/>
</dbReference>
<dbReference type="Pfam" id="PF00172">
    <property type="entry name" value="Zn_clus"/>
    <property type="match status" value="1"/>
</dbReference>
<dbReference type="PRINTS" id="PR00755">
    <property type="entry name" value="AFLATOXINBRP"/>
</dbReference>
<dbReference type="SMART" id="SM00906">
    <property type="entry name" value="Fungal_trans"/>
    <property type="match status" value="1"/>
</dbReference>
<dbReference type="SMART" id="SM00066">
    <property type="entry name" value="GAL4"/>
    <property type="match status" value="1"/>
</dbReference>
<dbReference type="SUPFAM" id="SSF57701">
    <property type="entry name" value="Zn2/Cys6 DNA-binding domain"/>
    <property type="match status" value="1"/>
</dbReference>
<dbReference type="PROSITE" id="PS00463">
    <property type="entry name" value="ZN2_CY6_FUNGAL_1"/>
    <property type="match status" value="1"/>
</dbReference>
<dbReference type="PROSITE" id="PS50048">
    <property type="entry name" value="ZN2_CY6_FUNGAL_2"/>
    <property type="match status" value="1"/>
</dbReference>
<feature type="chain" id="PRO_0000462482" description="Zn(2)-C6 fungal-type transcription factor FTF1a">
    <location>
        <begin position="1"/>
        <end position="1079"/>
    </location>
</feature>
<feature type="DNA-binding region" description="Zn(2)-C6 fungal-type" evidence="1">
    <location>
        <begin position="177"/>
        <end position="204"/>
    </location>
</feature>
<organism>
    <name type="scientific">Fusarium oxysporum f. sp. lycopersici (strain 4287 / CBS 123668 / FGSC 9935 / NRRL 34936)</name>
    <name type="common">Fusarium vascular wilt of tomato</name>
    <dbReference type="NCBI Taxonomy" id="426428"/>
    <lineage>
        <taxon>Eukaryota</taxon>
        <taxon>Fungi</taxon>
        <taxon>Dikarya</taxon>
        <taxon>Ascomycota</taxon>
        <taxon>Pezizomycotina</taxon>
        <taxon>Sordariomycetes</taxon>
        <taxon>Hypocreomycetidae</taxon>
        <taxon>Hypocreales</taxon>
        <taxon>Nectriaceae</taxon>
        <taxon>Fusarium</taxon>
        <taxon>Fusarium oxysporum species complex</taxon>
    </lineage>
</organism>
<comment type="function">
    <text evidence="2 3">Zn(2)-C6 fungal-type transcription factor that has a role in the establishment of the fungus within the plant and/or the progress of the disease (PubMed:17462924, PubMed:26817616). Regulates the expression of virulence factors such as SIX1 and SIX6 (PubMed:26817616).</text>
</comment>
<comment type="subcellular location">
    <subcellularLocation>
        <location evidence="1">Nucleus</location>
    </subcellularLocation>
</comment>
<comment type="induction">
    <text evidence="2">Exclusively expressed during infection of common bean.</text>
</comment>
<comment type="miscellaneous">
    <text evidence="2">Multiple copies of the gene are present in highly virulent fusarium oxysporum strains.</text>
</comment>
<proteinExistence type="evidence at transcript level"/>
<name>TF1A2_FUSO4</name>